<proteinExistence type="evidence at protein level"/>
<reference key="1">
    <citation type="journal article" date="2003" name="FASEB J.">
        <title>A reticular rhapsody: phylogenic evolution and nomenclature of the RTN/Nogo gene family.</title>
        <authorList>
            <person name="Oertle T."/>
            <person name="Klinger M."/>
            <person name="Stuermer C.A.O."/>
            <person name="Schwab M.E."/>
        </authorList>
    </citation>
    <scope>NUCLEOTIDE SEQUENCE [MRNA]</scope>
</reference>
<reference key="2">
    <citation type="journal article" date="1997" name="Yeast">
        <title>The nucleotide sequence of a 39 kb segment of yeast chromosome IV: 12 new open reading frames, nine known genes and one gene for Gly-tRNA.</title>
        <authorList>
            <person name="Bahr A."/>
            <person name="Moeller-Rieker S."/>
            <person name="Hankeln T."/>
            <person name="Kraemer C."/>
            <person name="Protin U."/>
            <person name="Schmidt E.R."/>
        </authorList>
    </citation>
    <scope>NUCLEOTIDE SEQUENCE [GENOMIC DNA]</scope>
    <source>
        <strain>ATCC 96604 / S288c / FY1679</strain>
    </source>
</reference>
<reference key="3">
    <citation type="journal article" date="1997" name="Nature">
        <title>The nucleotide sequence of Saccharomyces cerevisiae chromosome IV.</title>
        <authorList>
            <person name="Jacq C."/>
            <person name="Alt-Moerbe J."/>
            <person name="Andre B."/>
            <person name="Arnold W."/>
            <person name="Bahr A."/>
            <person name="Ballesta J.P.G."/>
            <person name="Bargues M."/>
            <person name="Baron L."/>
            <person name="Becker A."/>
            <person name="Biteau N."/>
            <person name="Bloecker H."/>
            <person name="Blugeon C."/>
            <person name="Boskovic J."/>
            <person name="Brandt P."/>
            <person name="Brueckner M."/>
            <person name="Buitrago M.J."/>
            <person name="Coster F."/>
            <person name="Delaveau T."/>
            <person name="del Rey F."/>
            <person name="Dujon B."/>
            <person name="Eide L.G."/>
            <person name="Garcia-Cantalejo J.M."/>
            <person name="Goffeau A."/>
            <person name="Gomez-Peris A."/>
            <person name="Granotier C."/>
            <person name="Hanemann V."/>
            <person name="Hankeln T."/>
            <person name="Hoheisel J.D."/>
            <person name="Jaeger W."/>
            <person name="Jimenez A."/>
            <person name="Jonniaux J.-L."/>
            <person name="Kraemer C."/>
            <person name="Kuester H."/>
            <person name="Laamanen P."/>
            <person name="Legros Y."/>
            <person name="Louis E.J."/>
            <person name="Moeller-Rieker S."/>
            <person name="Monnet A."/>
            <person name="Moro M."/>
            <person name="Mueller-Auer S."/>
            <person name="Nussbaumer B."/>
            <person name="Paricio N."/>
            <person name="Paulin L."/>
            <person name="Perea J."/>
            <person name="Perez-Alonso M."/>
            <person name="Perez-Ortin J.E."/>
            <person name="Pohl T.M."/>
            <person name="Prydz H."/>
            <person name="Purnelle B."/>
            <person name="Rasmussen S.W."/>
            <person name="Remacha M.A."/>
            <person name="Revuelta J.L."/>
            <person name="Rieger M."/>
            <person name="Salom D."/>
            <person name="Saluz H.P."/>
            <person name="Saiz J.E."/>
            <person name="Saren A.-M."/>
            <person name="Schaefer M."/>
            <person name="Scharfe M."/>
            <person name="Schmidt E.R."/>
            <person name="Schneider C."/>
            <person name="Scholler P."/>
            <person name="Schwarz S."/>
            <person name="Soler-Mira A."/>
            <person name="Urrestarazu L.A."/>
            <person name="Verhasselt P."/>
            <person name="Vissers S."/>
            <person name="Voet M."/>
            <person name="Volckaert G."/>
            <person name="Wagner G."/>
            <person name="Wambutt R."/>
            <person name="Wedler E."/>
            <person name="Wedler H."/>
            <person name="Woelfl S."/>
            <person name="Harris D.E."/>
            <person name="Bowman S."/>
            <person name="Brown D."/>
            <person name="Churcher C.M."/>
            <person name="Connor R."/>
            <person name="Dedman K."/>
            <person name="Gentles S."/>
            <person name="Hamlin N."/>
            <person name="Hunt S."/>
            <person name="Jones L."/>
            <person name="McDonald S."/>
            <person name="Murphy L.D."/>
            <person name="Niblett D."/>
            <person name="Odell C."/>
            <person name="Oliver K."/>
            <person name="Rajandream M.A."/>
            <person name="Richards C."/>
            <person name="Shore L."/>
            <person name="Walsh S.V."/>
            <person name="Barrell B.G."/>
            <person name="Dietrich F.S."/>
            <person name="Mulligan J.T."/>
            <person name="Allen E."/>
            <person name="Araujo R."/>
            <person name="Aviles E."/>
            <person name="Berno A."/>
            <person name="Carpenter J."/>
            <person name="Chen E."/>
            <person name="Cherry J.M."/>
            <person name="Chung E."/>
            <person name="Duncan M."/>
            <person name="Hunicke-Smith S."/>
            <person name="Hyman R.W."/>
            <person name="Komp C."/>
            <person name="Lashkari D."/>
            <person name="Lew H."/>
            <person name="Lin D."/>
            <person name="Mosedale D."/>
            <person name="Nakahara K."/>
            <person name="Namath A."/>
            <person name="Oefner P."/>
            <person name="Oh C."/>
            <person name="Petel F.X."/>
            <person name="Roberts D."/>
            <person name="Schramm S."/>
            <person name="Schroeder M."/>
            <person name="Shogren T."/>
            <person name="Shroff N."/>
            <person name="Winant A."/>
            <person name="Yelton M.A."/>
            <person name="Botstein D."/>
            <person name="Davis R.W."/>
            <person name="Johnston M."/>
            <person name="Andrews S."/>
            <person name="Brinkman R."/>
            <person name="Cooper J."/>
            <person name="Ding H."/>
            <person name="Du Z."/>
            <person name="Favello A."/>
            <person name="Fulton L."/>
            <person name="Gattung S."/>
            <person name="Greco T."/>
            <person name="Hallsworth K."/>
            <person name="Hawkins J."/>
            <person name="Hillier L.W."/>
            <person name="Jier M."/>
            <person name="Johnson D."/>
            <person name="Johnston L."/>
            <person name="Kirsten J."/>
            <person name="Kucaba T."/>
            <person name="Langston Y."/>
            <person name="Latreille P."/>
            <person name="Le T."/>
            <person name="Mardis E."/>
            <person name="Menezes S."/>
            <person name="Miller N."/>
            <person name="Nhan M."/>
            <person name="Pauley A."/>
            <person name="Peluso D."/>
            <person name="Rifkin L."/>
            <person name="Riles L."/>
            <person name="Taich A."/>
            <person name="Trevaskis E."/>
            <person name="Vignati D."/>
            <person name="Wilcox L."/>
            <person name="Wohldman P."/>
            <person name="Vaudin M."/>
            <person name="Wilson R."/>
            <person name="Waterston R."/>
            <person name="Albermann K."/>
            <person name="Hani J."/>
            <person name="Heumann K."/>
            <person name="Kleine K."/>
            <person name="Mewes H.-W."/>
            <person name="Zollner A."/>
            <person name="Zaccaria P."/>
        </authorList>
    </citation>
    <scope>NUCLEOTIDE SEQUENCE [LARGE SCALE GENOMIC DNA]</scope>
    <source>
        <strain>ATCC 204508 / S288c</strain>
    </source>
</reference>
<reference key="4">
    <citation type="journal article" date="2014" name="G3 (Bethesda)">
        <title>The reference genome sequence of Saccharomyces cerevisiae: Then and now.</title>
        <authorList>
            <person name="Engel S.R."/>
            <person name="Dietrich F.S."/>
            <person name="Fisk D.G."/>
            <person name="Binkley G."/>
            <person name="Balakrishnan R."/>
            <person name="Costanzo M.C."/>
            <person name="Dwight S.S."/>
            <person name="Hitz B.C."/>
            <person name="Karra K."/>
            <person name="Nash R.S."/>
            <person name="Weng S."/>
            <person name="Wong E.D."/>
            <person name="Lloyd P."/>
            <person name="Skrzypek M.S."/>
            <person name="Miyasato S.R."/>
            <person name="Simison M."/>
            <person name="Cherry J.M."/>
        </authorList>
    </citation>
    <scope>GENOME REANNOTATION</scope>
    <source>
        <strain>ATCC 204508 / S288c</strain>
    </source>
</reference>
<reference key="5">
    <citation type="journal article" date="2003" name="Nature">
        <title>Global analysis of protein localization in budding yeast.</title>
        <authorList>
            <person name="Huh W.-K."/>
            <person name="Falvo J.V."/>
            <person name="Gerke L.C."/>
            <person name="Carroll A.S."/>
            <person name="Howson R.W."/>
            <person name="Weissman J.S."/>
            <person name="O'Shea E.K."/>
        </authorList>
    </citation>
    <scope>SUBCELLULAR LOCATION [LARGE SCALE ANALYSIS]</scope>
</reference>
<reference key="6">
    <citation type="journal article" date="2006" name="Proc. Natl. Acad. Sci. U.S.A.">
        <title>A global topology map of the Saccharomyces cerevisiae membrane proteome.</title>
        <authorList>
            <person name="Kim H."/>
            <person name="Melen K."/>
            <person name="Oesterberg M."/>
            <person name="von Heijne G."/>
        </authorList>
    </citation>
    <scope>TOPOLOGY [LARGE SCALE ANALYSIS]</scope>
    <source>
        <strain>ATCC 208353 / W303-1A</strain>
    </source>
</reference>
<reference key="7">
    <citation type="journal article" date="2008" name="Mol. Cell. Proteomics">
        <title>A multidimensional chromatography technology for in-depth phosphoproteome analysis.</title>
        <authorList>
            <person name="Albuquerque C.P."/>
            <person name="Smolka M.B."/>
            <person name="Payne S.H."/>
            <person name="Bafna V."/>
            <person name="Eng J."/>
            <person name="Zhou H."/>
        </authorList>
    </citation>
    <scope>PHOSPHORYLATION [LARGE SCALE ANALYSIS] AT SER-278</scope>
    <scope>IDENTIFICATION BY MASS SPECTROMETRY [LARGE SCALE ANALYSIS]</scope>
</reference>
<accession>Q12443</accession>
<accession>D6VRF0</accession>
<keyword id="KW-0256">Endoplasmic reticulum</keyword>
<keyword id="KW-0325">Glycoprotein</keyword>
<keyword id="KW-0472">Membrane</keyword>
<keyword id="KW-0597">Phosphoprotein</keyword>
<keyword id="KW-1185">Reference proteome</keyword>
<keyword id="KW-0812">Transmembrane</keyword>
<keyword id="KW-1133">Transmembrane helix</keyword>
<name>RTN2_YEAST</name>
<feature type="chain" id="PRO_0000168169" description="Reticulon-like protein 2">
    <location>
        <begin position="1"/>
        <end position="393"/>
    </location>
</feature>
<feature type="topological domain" description="Cytoplasmic" evidence="1">
    <location>
        <begin position="1"/>
        <end position="60"/>
    </location>
</feature>
<feature type="transmembrane region" description="Helical" evidence="1">
    <location>
        <begin position="61"/>
        <end position="81"/>
    </location>
</feature>
<feature type="topological domain" description="Lumenal" evidence="1">
    <location>
        <begin position="82"/>
        <end position="149"/>
    </location>
</feature>
<feature type="transmembrane region" description="Helical" evidence="1">
    <location>
        <begin position="150"/>
        <end position="170"/>
    </location>
</feature>
<feature type="topological domain" description="Cytoplasmic" evidence="1">
    <location>
        <begin position="171"/>
        <end position="393"/>
    </location>
</feature>
<feature type="domain" description="Reticulon" evidence="2">
    <location>
        <begin position="30"/>
        <end position="236"/>
    </location>
</feature>
<feature type="region of interest" description="Disordered" evidence="3">
    <location>
        <begin position="1"/>
        <end position="25"/>
    </location>
</feature>
<feature type="region of interest" description="Disordered" evidence="3">
    <location>
        <begin position="214"/>
        <end position="313"/>
    </location>
</feature>
<feature type="region of interest" description="Disordered" evidence="3">
    <location>
        <begin position="339"/>
        <end position="393"/>
    </location>
</feature>
<feature type="compositionally biased region" description="Low complexity" evidence="3">
    <location>
        <begin position="1"/>
        <end position="21"/>
    </location>
</feature>
<feature type="compositionally biased region" description="Polar residues" evidence="3">
    <location>
        <begin position="220"/>
        <end position="285"/>
    </location>
</feature>
<feature type="compositionally biased region" description="Basic and acidic residues" evidence="3">
    <location>
        <begin position="289"/>
        <end position="313"/>
    </location>
</feature>
<feature type="compositionally biased region" description="Polar residues" evidence="3">
    <location>
        <begin position="365"/>
        <end position="376"/>
    </location>
</feature>
<feature type="compositionally biased region" description="Basic residues" evidence="3">
    <location>
        <begin position="381"/>
        <end position="393"/>
    </location>
</feature>
<feature type="modified residue" description="Phosphoserine" evidence="5">
    <location>
        <position position="278"/>
    </location>
</feature>
<feature type="glycosylation site" description="N-linked (GlcNAc...) asparagine" evidence="1">
    <location>
        <position position="137"/>
    </location>
</feature>
<comment type="interaction">
    <interactant intactId="EBI-32591">
        <id>Q12443</id>
    </interactant>
    <interactant intactId="EBI-38020">
        <id>Q04947</id>
        <label>RTN1</label>
    </interactant>
    <organismsDiffer>false</organismsDiffer>
    <experiments>3</experiments>
</comment>
<comment type="interaction">
    <interactant intactId="EBI-32591">
        <id>Q12443</id>
    </interactant>
    <interactant intactId="EBI-15874242">
        <id>P03588</id>
        <label>ORF1a</label>
    </interactant>
    <organismsDiffer>true</organismsDiffer>
    <experiments>4</experiments>
</comment>
<comment type="subcellular location">
    <subcellularLocation>
        <location evidence="4">Endoplasmic reticulum membrane</location>
        <topology evidence="4">Multi-pass membrane protein</topology>
    </subcellularLocation>
</comment>
<organism>
    <name type="scientific">Saccharomyces cerevisiae (strain ATCC 204508 / S288c)</name>
    <name type="common">Baker's yeast</name>
    <dbReference type="NCBI Taxonomy" id="559292"/>
    <lineage>
        <taxon>Eukaryota</taxon>
        <taxon>Fungi</taxon>
        <taxon>Dikarya</taxon>
        <taxon>Ascomycota</taxon>
        <taxon>Saccharomycotina</taxon>
        <taxon>Saccharomycetes</taxon>
        <taxon>Saccharomycetales</taxon>
        <taxon>Saccharomycetaceae</taxon>
        <taxon>Saccharomyces</taxon>
    </lineage>
</organism>
<sequence>MNRNTTTNKNANLNNSRNANAPGEAGHQNKTGLIYWTNPSKSGASFAATLVSLLILRNVNVISVLLKIGYMVLFTSFAVELSTKVLFDKGVVSRFGMQESPDLVGVLKPHIDRELDRLPALEDRIRKLVFAHRTRNNFTIGVSLYFLHGLFAIFSMNTVLIMTTIFLYTVPLIYDRKQARIDRAIDRMKDLVIHRFHKNYNKVVEKTEPYIDKIIPPQTDEGSYSTSISNENKSSTSQRNKSGLSSSEFDNMNDTSASKSGKDSYSTSQYNRAEYPVSQNENIGTLKSGKQEIPTEKDFNNRHENFSKPDVKTYDPRTVDIEEELAAHQRELEQNLKDGDYNLVGSKEIPDPITVPAPTRHTTKPAESQSIPIKNNETLHKTTHGLKQKLQHA</sequence>
<dbReference type="EMBL" id="AY164797">
    <property type="protein sequence ID" value="AAP47372.1"/>
    <property type="molecule type" value="mRNA"/>
</dbReference>
<dbReference type="EMBL" id="X99000">
    <property type="protein sequence ID" value="CAA67464.1"/>
    <property type="molecule type" value="Genomic_DNA"/>
</dbReference>
<dbReference type="EMBL" id="Z74252">
    <property type="protein sequence ID" value="CAA98782.1"/>
    <property type="molecule type" value="Genomic_DNA"/>
</dbReference>
<dbReference type="EMBL" id="BK006938">
    <property type="protein sequence ID" value="DAA11660.1"/>
    <property type="molecule type" value="Genomic_DNA"/>
</dbReference>
<dbReference type="PIR" id="S67763">
    <property type="entry name" value="S67763"/>
</dbReference>
<dbReference type="RefSeq" id="NP_010077.1">
    <property type="nucleotide sequence ID" value="NM_001180264.1"/>
</dbReference>
<dbReference type="BioGRID" id="31842">
    <property type="interactions" value="84"/>
</dbReference>
<dbReference type="DIP" id="DIP-4231N"/>
<dbReference type="FunCoup" id="Q12443">
    <property type="interactions" value="381"/>
</dbReference>
<dbReference type="IntAct" id="Q12443">
    <property type="interactions" value="26"/>
</dbReference>
<dbReference type="MINT" id="Q12443"/>
<dbReference type="STRING" id="4932.YDL204W"/>
<dbReference type="TCDB" id="8.A.102.1.8">
    <property type="family name" value="the reticulon (reticulon) family"/>
</dbReference>
<dbReference type="GlyCosmos" id="Q12443">
    <property type="glycosylation" value="1 site, No reported glycans"/>
</dbReference>
<dbReference type="GlyGen" id="Q12443">
    <property type="glycosylation" value="4 sites, 1 O-linked glycan (2 sites)"/>
</dbReference>
<dbReference type="iPTMnet" id="Q12443"/>
<dbReference type="PaxDb" id="4932-YDL204W"/>
<dbReference type="PeptideAtlas" id="Q12443"/>
<dbReference type="EnsemblFungi" id="YDL204W_mRNA">
    <property type="protein sequence ID" value="YDL204W"/>
    <property type="gene ID" value="YDL204W"/>
</dbReference>
<dbReference type="GeneID" id="851323"/>
<dbReference type="KEGG" id="sce:YDL204W"/>
<dbReference type="AGR" id="SGD:S000002363"/>
<dbReference type="SGD" id="S000002363">
    <property type="gene designation" value="RTN2"/>
</dbReference>
<dbReference type="VEuPathDB" id="FungiDB:YDL204W"/>
<dbReference type="eggNOG" id="KOG1792">
    <property type="taxonomic scope" value="Eukaryota"/>
</dbReference>
<dbReference type="GeneTree" id="ENSGT00940000176429"/>
<dbReference type="HOGENOM" id="CLU_861097_0_0_1"/>
<dbReference type="InParanoid" id="Q12443"/>
<dbReference type="OMA" id="NNRHENF"/>
<dbReference type="OrthoDB" id="567788at2759"/>
<dbReference type="BioCyc" id="YEAST:G3O-29587-MONOMER"/>
<dbReference type="BioGRID-ORCS" id="851323">
    <property type="hits" value="0 hits in 10 CRISPR screens"/>
</dbReference>
<dbReference type="PRO" id="PR:Q12443"/>
<dbReference type="Proteomes" id="UP000002311">
    <property type="component" value="Chromosome IV"/>
</dbReference>
<dbReference type="RNAct" id="Q12443">
    <property type="molecule type" value="protein"/>
</dbReference>
<dbReference type="GO" id="GO:0071944">
    <property type="term" value="C:cell periphery"/>
    <property type="evidence" value="ECO:0007005"/>
    <property type="project" value="SGD"/>
</dbReference>
<dbReference type="GO" id="GO:0032541">
    <property type="term" value="C:cortical endoplasmic reticulum"/>
    <property type="evidence" value="ECO:0000314"/>
    <property type="project" value="SGD"/>
</dbReference>
<dbReference type="GO" id="GO:0005737">
    <property type="term" value="C:cytoplasm"/>
    <property type="evidence" value="ECO:0007005"/>
    <property type="project" value="SGD"/>
</dbReference>
<dbReference type="GO" id="GO:0005783">
    <property type="term" value="C:endoplasmic reticulum"/>
    <property type="evidence" value="ECO:0007005"/>
    <property type="project" value="SGD"/>
</dbReference>
<dbReference type="GO" id="GO:0005789">
    <property type="term" value="C:endoplasmic reticulum membrane"/>
    <property type="evidence" value="ECO:0007669"/>
    <property type="project" value="UniProtKB-SubCell"/>
</dbReference>
<dbReference type="GO" id="GO:0071782">
    <property type="term" value="C:endoplasmic reticulum tubular network"/>
    <property type="evidence" value="ECO:0000314"/>
    <property type="project" value="SGD"/>
</dbReference>
<dbReference type="GO" id="GO:0005634">
    <property type="term" value="C:nucleus"/>
    <property type="evidence" value="ECO:0007005"/>
    <property type="project" value="SGD"/>
</dbReference>
<dbReference type="GO" id="GO:0048309">
    <property type="term" value="P:endoplasmic reticulum inheritance"/>
    <property type="evidence" value="ECO:0000316"/>
    <property type="project" value="SGD"/>
</dbReference>
<dbReference type="GO" id="GO:0071788">
    <property type="term" value="P:endoplasmic reticulum tubular network maintenance"/>
    <property type="evidence" value="ECO:0000316"/>
    <property type="project" value="SGD"/>
</dbReference>
<dbReference type="GO" id="GO:0071786">
    <property type="term" value="P:endoplasmic reticulum tubular network organization"/>
    <property type="evidence" value="ECO:0000315"/>
    <property type="project" value="UniProtKB"/>
</dbReference>
<dbReference type="GO" id="GO:0032581">
    <property type="term" value="P:ER-dependent peroxisome organization"/>
    <property type="evidence" value="ECO:0000316"/>
    <property type="project" value="SGD"/>
</dbReference>
<dbReference type="GO" id="GO:0034976">
    <property type="term" value="P:response to endoplasmic reticulum stress"/>
    <property type="evidence" value="ECO:0000316"/>
    <property type="project" value="SGD"/>
</dbReference>
<dbReference type="InterPro" id="IPR003388">
    <property type="entry name" value="Reticulon"/>
</dbReference>
<dbReference type="Pfam" id="PF02453">
    <property type="entry name" value="Reticulon"/>
    <property type="match status" value="1"/>
</dbReference>
<dbReference type="PROSITE" id="PS50845">
    <property type="entry name" value="RETICULON"/>
    <property type="match status" value="1"/>
</dbReference>
<gene>
    <name type="primary">RTN2</name>
    <name type="ordered locus">YDL204W</name>
    <name type="ORF">D1062</name>
</gene>
<evidence type="ECO:0000255" key="1"/>
<evidence type="ECO:0000255" key="2">
    <source>
        <dbReference type="PROSITE-ProRule" id="PRU00170"/>
    </source>
</evidence>
<evidence type="ECO:0000256" key="3">
    <source>
        <dbReference type="SAM" id="MobiDB-lite"/>
    </source>
</evidence>
<evidence type="ECO:0000269" key="4">
    <source>
    </source>
</evidence>
<evidence type="ECO:0007744" key="5">
    <source>
    </source>
</evidence>
<protein>
    <recommendedName>
        <fullName>Reticulon-like protein 2</fullName>
    </recommendedName>
</protein>